<protein>
    <recommendedName>
        <fullName evidence="2">ATP-dependent Clp protease proteolytic subunit 1, mitochondrial</fullName>
        <ecNumber>3.4.21.92</ecNumber>
    </recommendedName>
</protein>
<feature type="transit peptide" description="Mitochondrion" evidence="2">
    <location>
        <begin position="1"/>
        <end position="23"/>
    </location>
</feature>
<feature type="chain" id="PRO_0000395329" description="ATP-dependent Clp protease proteolytic subunit 1, mitochondrial" evidence="2">
    <location>
        <begin position="24"/>
        <end position="219"/>
    </location>
</feature>
<feature type="active site" description="Nucleophile" evidence="1">
    <location>
        <position position="118"/>
    </location>
</feature>
<feature type="active site" evidence="3">
    <location>
        <position position="143"/>
    </location>
</feature>
<gene>
    <name evidence="4" type="primary">clpp-1</name>
    <name type="ORF">CBG00853</name>
</gene>
<reference evidence="4" key="1">
    <citation type="journal article" date="2003" name="PLoS Biol.">
        <title>The genome sequence of Caenorhabditis briggsae: a platform for comparative genomics.</title>
        <authorList>
            <person name="Stein L.D."/>
            <person name="Bao Z."/>
            <person name="Blasiar D."/>
            <person name="Blumenthal T."/>
            <person name="Brent M.R."/>
            <person name="Chen N."/>
            <person name="Chinwalla A."/>
            <person name="Clarke L."/>
            <person name="Clee C."/>
            <person name="Coghlan A."/>
            <person name="Coulson A."/>
            <person name="D'Eustachio P."/>
            <person name="Fitch D.H.A."/>
            <person name="Fulton L.A."/>
            <person name="Fulton R.E."/>
            <person name="Griffiths-Jones S."/>
            <person name="Harris T.W."/>
            <person name="Hillier L.W."/>
            <person name="Kamath R."/>
            <person name="Kuwabara P.E."/>
            <person name="Mardis E.R."/>
            <person name="Marra M.A."/>
            <person name="Miner T.L."/>
            <person name="Minx P."/>
            <person name="Mullikin J.C."/>
            <person name="Plumb R.W."/>
            <person name="Rogers J."/>
            <person name="Schein J.E."/>
            <person name="Sohrmann M."/>
            <person name="Spieth J."/>
            <person name="Stajich J.E."/>
            <person name="Wei C."/>
            <person name="Willey D."/>
            <person name="Wilson R.K."/>
            <person name="Durbin R.M."/>
            <person name="Waterston R.H."/>
        </authorList>
    </citation>
    <scope>NUCLEOTIDE SEQUENCE [LARGE SCALE GENOMIC DNA]</scope>
    <source>
        <strain>AF16</strain>
    </source>
</reference>
<comment type="function">
    <text evidence="2">Clp cleaves peptides in various proteins in a process that requires ATP hydrolysis. Clp may be responsible for a fairly general and central housekeeping function rather than for the degradation of specific substrates (By similarity).</text>
</comment>
<comment type="catalytic activity">
    <reaction evidence="3">
        <text>Hydrolysis of proteins to small peptides in the presence of ATP and magnesium. alpha-casein is the usual test substrate. In the absence of ATP, only oligopeptides shorter than five residues are hydrolyzed (such as succinyl-Leu-Tyr-|-NHMec, and Leu-Tyr-Leu-|-Tyr-Trp, in which cleavage of the -Tyr-|-Leu- and -Tyr-|-Trp bonds also occurs).</text>
        <dbReference type="EC" id="3.4.21.92"/>
    </reaction>
</comment>
<comment type="subunit">
    <text evidence="2">Tetradecamer that assembles into a two heptameric rings with a central cavity.</text>
</comment>
<comment type="subcellular location">
    <subcellularLocation>
        <location evidence="2">Mitochondrion matrix</location>
    </subcellularLocation>
</comment>
<comment type="similarity">
    <text evidence="3">Belongs to the peptidase S14 family.</text>
</comment>
<evidence type="ECO:0000250" key="1"/>
<evidence type="ECO:0000250" key="2">
    <source>
        <dbReference type="UniProtKB" id="Q27539"/>
    </source>
</evidence>
<evidence type="ECO:0000255" key="3"/>
<evidence type="ECO:0000312" key="4">
    <source>
        <dbReference type="EMBL" id="CAP22373.2"/>
    </source>
</evidence>
<organism>
    <name type="scientific">Caenorhabditis briggsae</name>
    <dbReference type="NCBI Taxonomy" id="6238"/>
    <lineage>
        <taxon>Eukaryota</taxon>
        <taxon>Metazoa</taxon>
        <taxon>Ecdysozoa</taxon>
        <taxon>Nematoda</taxon>
        <taxon>Chromadorea</taxon>
        <taxon>Rhabditida</taxon>
        <taxon>Rhabditina</taxon>
        <taxon>Rhabditomorpha</taxon>
        <taxon>Rhabditoidea</taxon>
        <taxon>Rhabditidae</taxon>
        <taxon>Peloderinae</taxon>
        <taxon>Caenorhabditis</taxon>
    </lineage>
</organism>
<proteinExistence type="inferred from homology"/>
<keyword id="KW-0378">Hydrolase</keyword>
<keyword id="KW-0496">Mitochondrion</keyword>
<keyword id="KW-0645">Protease</keyword>
<keyword id="KW-1185">Reference proteome</keyword>
<keyword id="KW-0720">Serine protease</keyword>
<keyword id="KW-0809">Transit peptide</keyword>
<accession>A8WPG6</accession>
<dbReference type="EC" id="3.4.21.92"/>
<dbReference type="EMBL" id="HE600951">
    <property type="protein sequence ID" value="CAP22373.2"/>
    <property type="molecule type" value="Genomic_DNA"/>
</dbReference>
<dbReference type="SMR" id="A8WPG6"/>
<dbReference type="FunCoup" id="A8WPG6">
    <property type="interactions" value="2156"/>
</dbReference>
<dbReference type="STRING" id="6238.A8WPG6"/>
<dbReference type="MEROPS" id="S14.A04"/>
<dbReference type="EnsemblMetazoa" id="CBG00853.1">
    <property type="protein sequence ID" value="CBG00853.1"/>
    <property type="gene ID" value="WBGene00024182"/>
</dbReference>
<dbReference type="WormBase" id="CBG00853">
    <property type="protein sequence ID" value="CBP30799"/>
    <property type="gene ID" value="WBGene00024182"/>
    <property type="gene designation" value="Cbr-clpp-1"/>
</dbReference>
<dbReference type="eggNOG" id="KOG0840">
    <property type="taxonomic scope" value="Eukaryota"/>
</dbReference>
<dbReference type="HOGENOM" id="CLU_058707_3_0_1"/>
<dbReference type="InParanoid" id="A8WPG6"/>
<dbReference type="OMA" id="RDYWMKA"/>
<dbReference type="Proteomes" id="UP000008549">
    <property type="component" value="Unassembled WGS sequence"/>
</dbReference>
<dbReference type="GO" id="GO:0009368">
    <property type="term" value="C:endopeptidase Clp complex"/>
    <property type="evidence" value="ECO:0000318"/>
    <property type="project" value="GO_Central"/>
</dbReference>
<dbReference type="GO" id="GO:0005759">
    <property type="term" value="C:mitochondrial matrix"/>
    <property type="evidence" value="ECO:0007669"/>
    <property type="project" value="UniProtKB-SubCell"/>
</dbReference>
<dbReference type="GO" id="GO:0004176">
    <property type="term" value="F:ATP-dependent peptidase activity"/>
    <property type="evidence" value="ECO:0000318"/>
    <property type="project" value="GO_Central"/>
</dbReference>
<dbReference type="GO" id="GO:0051117">
    <property type="term" value="F:ATPase binding"/>
    <property type="evidence" value="ECO:0000318"/>
    <property type="project" value="GO_Central"/>
</dbReference>
<dbReference type="GO" id="GO:0004252">
    <property type="term" value="F:serine-type endopeptidase activity"/>
    <property type="evidence" value="ECO:0000318"/>
    <property type="project" value="GO_Central"/>
</dbReference>
<dbReference type="GO" id="GO:0034514">
    <property type="term" value="P:mitochondrial unfolded protein response"/>
    <property type="evidence" value="ECO:0007669"/>
    <property type="project" value="EnsemblMetazoa"/>
</dbReference>
<dbReference type="GO" id="GO:0006515">
    <property type="term" value="P:protein quality control for misfolded or incompletely synthesized proteins"/>
    <property type="evidence" value="ECO:0000318"/>
    <property type="project" value="GO_Central"/>
</dbReference>
<dbReference type="CDD" id="cd07017">
    <property type="entry name" value="S14_ClpP_2"/>
    <property type="match status" value="1"/>
</dbReference>
<dbReference type="FunFam" id="3.90.226.10:FF:000001">
    <property type="entry name" value="ATP-dependent Clp protease proteolytic subunit"/>
    <property type="match status" value="1"/>
</dbReference>
<dbReference type="Gene3D" id="3.90.226.10">
    <property type="entry name" value="2-enoyl-CoA Hydratase, Chain A, domain 1"/>
    <property type="match status" value="1"/>
</dbReference>
<dbReference type="HAMAP" id="MF_00444">
    <property type="entry name" value="ClpP"/>
    <property type="match status" value="1"/>
</dbReference>
<dbReference type="InterPro" id="IPR001907">
    <property type="entry name" value="ClpP"/>
</dbReference>
<dbReference type="InterPro" id="IPR029045">
    <property type="entry name" value="ClpP/crotonase-like_dom_sf"/>
</dbReference>
<dbReference type="InterPro" id="IPR023562">
    <property type="entry name" value="ClpP/TepA"/>
</dbReference>
<dbReference type="InterPro" id="IPR033135">
    <property type="entry name" value="ClpP_His_AS"/>
</dbReference>
<dbReference type="InterPro" id="IPR018215">
    <property type="entry name" value="ClpP_Ser_AS"/>
</dbReference>
<dbReference type="NCBIfam" id="NF001368">
    <property type="entry name" value="PRK00277.1"/>
    <property type="match status" value="1"/>
</dbReference>
<dbReference type="NCBIfam" id="NF009205">
    <property type="entry name" value="PRK12553.1"/>
    <property type="match status" value="1"/>
</dbReference>
<dbReference type="PANTHER" id="PTHR10381">
    <property type="entry name" value="ATP-DEPENDENT CLP PROTEASE PROTEOLYTIC SUBUNIT"/>
    <property type="match status" value="1"/>
</dbReference>
<dbReference type="PANTHER" id="PTHR10381:SF11">
    <property type="entry name" value="ATP-DEPENDENT CLP PROTEASE PROTEOLYTIC SUBUNIT, MITOCHONDRIAL"/>
    <property type="match status" value="1"/>
</dbReference>
<dbReference type="Pfam" id="PF00574">
    <property type="entry name" value="CLP_protease"/>
    <property type="match status" value="1"/>
</dbReference>
<dbReference type="PRINTS" id="PR00127">
    <property type="entry name" value="CLPPROTEASEP"/>
</dbReference>
<dbReference type="SUPFAM" id="SSF52096">
    <property type="entry name" value="ClpP/crotonase"/>
    <property type="match status" value="1"/>
</dbReference>
<dbReference type="PROSITE" id="PS00382">
    <property type="entry name" value="CLP_PROTEASE_HIS"/>
    <property type="match status" value="1"/>
</dbReference>
<dbReference type="PROSITE" id="PS00381">
    <property type="entry name" value="CLP_PROTEASE_SER"/>
    <property type="match status" value="1"/>
</dbReference>
<sequence>MLRRILTTSSVRNLTSSTQARVGIPFVIDNEGKGERTYDIYSRLLRDRIVCLMTPVDDFMASALIAQLLFLQSESSKKPIHMYINSPGGSVTAGLAIYDTMQMISAPVATWVIGQASSMGSLLLAAGEKGMRSALPNARIMVHQPSGGAQGTCSDIVIRAEEITRLKKRLNEIYVHHTGISYDEIERTLDRDRFMSAQEALKFGLVDKIEKHTGSMPTD</sequence>
<name>CLPP1_CAEBR</name>